<accession>P09009</accession>
<accession>Q3T4P5</accession>
<proteinExistence type="evidence at protein level"/>
<dbReference type="EMBL" id="X06321">
    <property type="protein sequence ID" value="CAA29636.1"/>
    <property type="molecule type" value="Genomic_DNA"/>
</dbReference>
<dbReference type="EMBL" id="M22161">
    <property type="protein sequence ID" value="AAA32449.1"/>
    <property type="molecule type" value="Genomic_DNA"/>
</dbReference>
<dbReference type="EMBL" id="AY848689">
    <property type="protein sequence ID" value="AAX45926.1"/>
    <property type="molecule type" value="Genomic_DNA"/>
</dbReference>
<dbReference type="PIR" id="S01613">
    <property type="entry name" value="TPBPPR"/>
</dbReference>
<dbReference type="RefSeq" id="NP_040681.1">
    <property type="nucleotide sequence ID" value="NC_001421.2"/>
</dbReference>
<dbReference type="OrthoDB" id="29946at10239"/>
<dbReference type="Proteomes" id="UP000002143">
    <property type="component" value="Segment"/>
</dbReference>
<dbReference type="GO" id="GO:0042025">
    <property type="term" value="C:host cell nucleus"/>
    <property type="evidence" value="ECO:0007669"/>
    <property type="project" value="UniProtKB-SubCell"/>
</dbReference>
<dbReference type="GO" id="GO:0044423">
    <property type="term" value="C:virion component"/>
    <property type="evidence" value="ECO:0007669"/>
    <property type="project" value="UniProtKB-KW"/>
</dbReference>
<dbReference type="GO" id="GO:0003677">
    <property type="term" value="F:DNA binding"/>
    <property type="evidence" value="ECO:0007669"/>
    <property type="project" value="UniProtKB-KW"/>
</dbReference>
<dbReference type="GO" id="GO:0000166">
    <property type="term" value="F:nucleotide binding"/>
    <property type="evidence" value="ECO:0007669"/>
    <property type="project" value="UniProtKB-KW"/>
</dbReference>
<dbReference type="GO" id="GO:0006260">
    <property type="term" value="P:DNA replication"/>
    <property type="evidence" value="ECO:0007669"/>
    <property type="project" value="UniProtKB-KW"/>
</dbReference>
<dbReference type="GO" id="GO:0019073">
    <property type="term" value="P:viral DNA genome packaging"/>
    <property type="evidence" value="ECO:0000314"/>
    <property type="project" value="CACAO"/>
</dbReference>
<dbReference type="GO" id="GO:0039693">
    <property type="term" value="P:viral DNA genome replication"/>
    <property type="evidence" value="ECO:0007669"/>
    <property type="project" value="UniProtKB-KW"/>
</dbReference>
<feature type="chain" id="PRO_0000165347" description="DNA terminal protein">
    <location>
        <begin position="1"/>
        <end position="259"/>
    </location>
</feature>
<feature type="short sequence motif" description="Nuclear localization signal" evidence="4">
    <location>
        <begin position="243"/>
        <end position="259"/>
    </location>
</feature>
<feature type="modified residue" description="O-(5'-phospho-DNA)-tyrosine" evidence="2">
    <location>
        <position position="190"/>
    </location>
</feature>
<reference key="1">
    <citation type="journal article" date="1987" name="Nucleic Acids Res.">
        <title>Primary structure of the DNA terminal protein of bacteriophage PRD1.</title>
        <authorList>
            <person name="Hsieh J.-C."/>
            <person name="Jung G."/>
            <person name="Leavitt M.C."/>
            <person name="Ito J."/>
        </authorList>
    </citation>
    <scope>NUCLEOTIDE SEQUENCE [GENOMIC DNA]</scope>
</reference>
<reference key="2">
    <citation type="journal article" date="1987" name="Gene">
        <title>The complete nucleotide sequence of the left very early region of Escherichia coli bacteriophage PRD1 coding for the terminal protein and the DNA polymerase.</title>
        <authorList>
            <person name="Savilahti H."/>
            <person name="Bamford D.H."/>
        </authorList>
    </citation>
    <scope>NUCLEOTIDE SEQUENCE [GENOMIC DNA]</scope>
</reference>
<reference key="3">
    <citation type="journal article" date="1991" name="Virology">
        <title>Genome organization of membrane-containing bacteriophage PRD1.</title>
        <authorList>
            <person name="Bamford J.K.H."/>
            <person name="Haenninen A.-L."/>
            <person name="Pakula T.M."/>
            <person name="Ojala P.M."/>
            <person name="Kalkkinen N."/>
            <person name="Frilander M."/>
            <person name="Bamford D.H."/>
        </authorList>
    </citation>
    <scope>NUCLEOTIDE SEQUENCE [GENOMIC DNA]</scope>
</reference>
<reference key="4">
    <citation type="journal article" date="2005" name="J. Mol. Biol.">
        <title>A snapshot of viral evolution from genome analysis of the tectiviridae family.</title>
        <authorList>
            <person name="Saren A.M."/>
            <person name="Ravantti J.J."/>
            <person name="Benson S.D."/>
            <person name="Burnett R.M."/>
            <person name="Paulin L."/>
            <person name="Bamford D.H."/>
            <person name="Bamford J.K.H."/>
        </authorList>
    </citation>
    <scope>NUCLEOTIDE SEQUENCE [GENOMIC DNA]</scope>
</reference>
<reference key="5">
    <citation type="journal article" date="1991" name="Nucleic Acids Res.">
        <title>Mapping of the DNA linking tyrosine residue of the PRD1 terminal protein.</title>
        <authorList>
            <person name="Shiue S.Y."/>
            <person name="Hsieh J.C."/>
            <person name="Ito J."/>
        </authorList>
    </citation>
    <scope>COVALENT DNA LINKAGE AT TYR-190</scope>
</reference>
<reference key="6">
    <citation type="journal article" date="2010" name="Proc. Natl. Acad. Sci. U.S.A.">
        <title>Viral terminal protein directs early organization of phage DNA replication at the bacterial nucleoid.</title>
        <authorList>
            <person name="Munoz-Espin D."/>
            <person name="Holguera I."/>
            <person name="Ballesteros-Plaza D."/>
            <person name="Carballido-Lopez R."/>
            <person name="Salas M."/>
        </authorList>
    </citation>
    <scope>FUNCTION</scope>
</reference>
<reference key="7">
    <citation type="journal article" date="2012" name="Proc. Natl. Acad. Sci. U.S.A.">
        <title>Functional eukaryotic nuclear localization signals are widespread in terminal proteins of bacteriophages.</title>
        <authorList>
            <person name="Redrejo-Rodriguez M."/>
            <person name="Munoz-Espin D."/>
            <person name="Holguera I."/>
            <person name="Mencia M."/>
            <person name="Salas M."/>
        </authorList>
    </citation>
    <scope>SUBCELLULAR LOCATION</scope>
    <scope>NUCLEAR LOCALIZATION SIGNAL</scope>
</reference>
<comment type="function">
    <text evidence="1 3">Acts as a primer for viral genomic replication. DNA terminal protein is covalently linked to the 5'-ends of both strands of the genome through a phosphodiester bond between the beta-hydroxyl group of a tyrosine residue and the 5'-phosphate of the terminal deoxyadenylate. This protein is essential for DNA replication and is involved in the priming of DNA elongation (By similarity).</text>
</comment>
<comment type="subunit">
    <text evidence="1">Heterodimer with viral polymerase. Binds to ssDNA (By similarity).</text>
</comment>
<comment type="subcellular location">
    <subcellularLocation>
        <location>Virion</location>
    </subcellularLocation>
    <subcellularLocation>
        <location evidence="4">Host nucleus</location>
    </subcellularLocation>
</comment>
<comment type="similarity">
    <text evidence="5">Belongs to the tectivirus DNA terminal protein family.</text>
</comment>
<gene>
    <name type="primary">VIII</name>
</gene>
<protein>
    <recommendedName>
        <fullName>DNA terminal protein</fullName>
    </recommendedName>
    <alternativeName>
        <fullName>Protein P8</fullName>
    </alternativeName>
</protein>
<evidence type="ECO:0000250" key="1"/>
<evidence type="ECO:0000269" key="2">
    <source>
    </source>
</evidence>
<evidence type="ECO:0000269" key="3">
    <source>
    </source>
</evidence>
<evidence type="ECO:0000269" key="4">
    <source>
    </source>
</evidence>
<evidence type="ECO:0000305" key="5"/>
<keyword id="KW-0190">Covalent protein-DNA linkage</keyword>
<keyword id="KW-0235">DNA replication</keyword>
<keyword id="KW-0238">DNA-binding</keyword>
<keyword id="KW-0244">Early protein</keyword>
<keyword id="KW-1048">Host nucleus</keyword>
<keyword id="KW-0547">Nucleotide-binding</keyword>
<keyword id="KW-0597">Phosphoprotein</keyword>
<keyword id="KW-1185">Reference proteome</keyword>
<keyword id="KW-1194">Viral DNA replication</keyword>
<keyword id="KW-0946">Virion</keyword>
<organism>
    <name type="scientific">Enterobacteria phage PRD1</name>
    <name type="common">Bacteriophage PRD1</name>
    <dbReference type="NCBI Taxonomy" id="10658"/>
    <lineage>
        <taxon>Viruses</taxon>
        <taxon>Varidnaviria</taxon>
        <taxon>Bamfordvirae</taxon>
        <taxon>Preplasmiviricota</taxon>
        <taxon>Tectiliviricetes</taxon>
        <taxon>Kalamavirales</taxon>
        <taxon>Tectiviridae</taxon>
        <taxon>Alphatectivirus</taxon>
        <taxon>Alphatectivirus PRD1</taxon>
    </lineage>
</organism>
<organismHost>
    <name type="scientific">Acinetobacter calcoaceticus</name>
    <dbReference type="NCBI Taxonomy" id="471"/>
</organismHost>
<organismHost>
    <name type="scientific">Escherichia coli</name>
    <dbReference type="NCBI Taxonomy" id="562"/>
</organismHost>
<organismHost>
    <name type="scientific">Proteus mirabilis</name>
    <dbReference type="NCBI Taxonomy" id="584"/>
</organismHost>
<organismHost>
    <name type="scientific">Pseudomonas aeruginosa</name>
    <dbReference type="NCBI Taxonomy" id="287"/>
</organismHost>
<organismHost>
    <name type="scientific">Pseudomonas fluorescens</name>
    <dbReference type="NCBI Taxonomy" id="294"/>
</organismHost>
<organismHost>
    <name type="scientific">Pseudomonas putida</name>
    <name type="common">Arthrobacter siderocapsulatus</name>
    <dbReference type="NCBI Taxonomy" id="303"/>
</organismHost>
<organismHost>
    <name type="scientific">Salmonella typhimurium</name>
    <dbReference type="NCBI Taxonomy" id="90371"/>
</organismHost>
<organismHost>
    <name type="scientific">Vibrio cholerae</name>
    <dbReference type="NCBI Taxonomy" id="666"/>
</organismHost>
<name>TERM_BPPRD</name>
<sequence length="259" mass="29514">MAKKKPVEKNGLVYKEFQKQVSNLKKAGLIPKTLDVRKVKPTKHYKGLVSKYKDVATGGAKLAAIPNPAVIETLEARGESIIKKGGKAYLKARQQINQRGQIVNPFTVRVTKRGEVVRRYRKTTPEGKPVYITQRELPIKFENMEQWLTELKAAGFQLQPGEQIYFTFNGNYSRRTYTSFDEAFNKFMTYDIIIDAVAGKLKVEDEADLVKSVGFQRISGPEAKAYNRNRIVLPEMQFSQAAKKKYKRRQKRGYGSKGV</sequence>